<evidence type="ECO:0000255" key="1">
    <source>
        <dbReference type="HAMAP-Rule" id="MF_00001"/>
    </source>
</evidence>
<accession>Q328U0</accession>
<organism>
    <name type="scientific">Shigella dysenteriae serotype 1 (strain Sd197)</name>
    <dbReference type="NCBI Taxonomy" id="300267"/>
    <lineage>
        <taxon>Bacteria</taxon>
        <taxon>Pseudomonadati</taxon>
        <taxon>Pseudomonadota</taxon>
        <taxon>Gammaproteobacteria</taxon>
        <taxon>Enterobacterales</taxon>
        <taxon>Enterobacteriaceae</taxon>
        <taxon>Shigella</taxon>
    </lineage>
</organism>
<comment type="function">
    <text evidence="1">Catalyzes the condensation of carbamoyl phosphate and aspartate to form carbamoyl aspartate and inorganic phosphate, the committed step in the de novo pyrimidine nucleotide biosynthesis pathway.</text>
</comment>
<comment type="catalytic activity">
    <reaction evidence="1">
        <text>carbamoyl phosphate + L-aspartate = N-carbamoyl-L-aspartate + phosphate + H(+)</text>
        <dbReference type="Rhea" id="RHEA:20013"/>
        <dbReference type="ChEBI" id="CHEBI:15378"/>
        <dbReference type="ChEBI" id="CHEBI:29991"/>
        <dbReference type="ChEBI" id="CHEBI:32814"/>
        <dbReference type="ChEBI" id="CHEBI:43474"/>
        <dbReference type="ChEBI" id="CHEBI:58228"/>
        <dbReference type="EC" id="2.1.3.2"/>
    </reaction>
</comment>
<comment type="pathway">
    <text evidence="1">Pyrimidine metabolism; UMP biosynthesis via de novo pathway; (S)-dihydroorotate from bicarbonate: step 2/3.</text>
</comment>
<comment type="subunit">
    <text evidence="1">Heterododecamer (2C3:3R2) of six catalytic PyrB chains organized as two trimers (C3), and six regulatory PyrI chains organized as three dimers (R2).</text>
</comment>
<comment type="similarity">
    <text evidence="1">Belongs to the aspartate/ornithine carbamoyltransferase superfamily. ATCase family.</text>
</comment>
<keyword id="KW-0665">Pyrimidine biosynthesis</keyword>
<keyword id="KW-1185">Reference proteome</keyword>
<keyword id="KW-0808">Transferase</keyword>
<proteinExistence type="inferred from homology"/>
<sequence length="311" mass="34427">MANPLYQKHIISINDLSRDDLNLVLATAAKLKANPQPELLKHKVIASCFFEASTRTRLSFETSMHRLGASVVGFSDSANTSLGKKGETLADTISVISTYVDAIVMRHPQEGAARLATEFSGNVPVLNAGDGSNQHPTQTLLDLFTIQETQGRLDNLHVAMVGDLKYGRTVHSLTQALAKFDGNRFYFIAPDALAMPQYILDMLDEKGIAWSLHSSIEEVMAEVDILYMTRVQKERLDPSEYANVKAQFVLRASDLHNAKANMKVLHPLPRVDEIATDVDKTPHAWYFQQAGNGIFARQALLALVLNRDLVL</sequence>
<name>PYRB_SHIDS</name>
<reference key="1">
    <citation type="journal article" date="2005" name="Nucleic Acids Res.">
        <title>Genome dynamics and diversity of Shigella species, the etiologic agents of bacillary dysentery.</title>
        <authorList>
            <person name="Yang F."/>
            <person name="Yang J."/>
            <person name="Zhang X."/>
            <person name="Chen L."/>
            <person name="Jiang Y."/>
            <person name="Yan Y."/>
            <person name="Tang X."/>
            <person name="Wang J."/>
            <person name="Xiong Z."/>
            <person name="Dong J."/>
            <person name="Xue Y."/>
            <person name="Zhu Y."/>
            <person name="Xu X."/>
            <person name="Sun L."/>
            <person name="Chen S."/>
            <person name="Nie H."/>
            <person name="Peng J."/>
            <person name="Xu J."/>
            <person name="Wang Y."/>
            <person name="Yuan Z."/>
            <person name="Wen Y."/>
            <person name="Yao Z."/>
            <person name="Shen Y."/>
            <person name="Qiang B."/>
            <person name="Hou Y."/>
            <person name="Yu J."/>
            <person name="Jin Q."/>
        </authorList>
    </citation>
    <scope>NUCLEOTIDE SEQUENCE [LARGE SCALE GENOMIC DNA]</scope>
    <source>
        <strain>Sd197</strain>
    </source>
</reference>
<feature type="chain" id="PRO_0000301619" description="Aspartate carbamoyltransferase catalytic subunit">
    <location>
        <begin position="1"/>
        <end position="311"/>
    </location>
</feature>
<feature type="binding site" evidence="1">
    <location>
        <position position="55"/>
    </location>
    <ligand>
        <name>carbamoyl phosphate</name>
        <dbReference type="ChEBI" id="CHEBI:58228"/>
    </ligand>
</feature>
<feature type="binding site" evidence="1">
    <location>
        <position position="56"/>
    </location>
    <ligand>
        <name>carbamoyl phosphate</name>
        <dbReference type="ChEBI" id="CHEBI:58228"/>
    </ligand>
</feature>
<feature type="binding site" evidence="1">
    <location>
        <position position="85"/>
    </location>
    <ligand>
        <name>L-aspartate</name>
        <dbReference type="ChEBI" id="CHEBI:29991"/>
    </ligand>
</feature>
<feature type="binding site" evidence="1">
    <location>
        <position position="106"/>
    </location>
    <ligand>
        <name>carbamoyl phosphate</name>
        <dbReference type="ChEBI" id="CHEBI:58228"/>
    </ligand>
</feature>
<feature type="binding site" evidence="1">
    <location>
        <position position="135"/>
    </location>
    <ligand>
        <name>carbamoyl phosphate</name>
        <dbReference type="ChEBI" id="CHEBI:58228"/>
    </ligand>
</feature>
<feature type="binding site" evidence="1">
    <location>
        <position position="138"/>
    </location>
    <ligand>
        <name>carbamoyl phosphate</name>
        <dbReference type="ChEBI" id="CHEBI:58228"/>
    </ligand>
</feature>
<feature type="binding site" evidence="1">
    <location>
        <position position="168"/>
    </location>
    <ligand>
        <name>L-aspartate</name>
        <dbReference type="ChEBI" id="CHEBI:29991"/>
    </ligand>
</feature>
<feature type="binding site" evidence="1">
    <location>
        <position position="230"/>
    </location>
    <ligand>
        <name>L-aspartate</name>
        <dbReference type="ChEBI" id="CHEBI:29991"/>
    </ligand>
</feature>
<feature type="binding site" evidence="1">
    <location>
        <position position="268"/>
    </location>
    <ligand>
        <name>carbamoyl phosphate</name>
        <dbReference type="ChEBI" id="CHEBI:58228"/>
    </ligand>
</feature>
<feature type="binding site" evidence="1">
    <location>
        <position position="269"/>
    </location>
    <ligand>
        <name>carbamoyl phosphate</name>
        <dbReference type="ChEBI" id="CHEBI:58228"/>
    </ligand>
</feature>
<dbReference type="EC" id="2.1.3.2" evidence="1"/>
<dbReference type="EMBL" id="CP000034">
    <property type="protein sequence ID" value="ABB64165.1"/>
    <property type="molecule type" value="Genomic_DNA"/>
</dbReference>
<dbReference type="RefSeq" id="WP_000013046.1">
    <property type="nucleotide sequence ID" value="NC_007606.1"/>
</dbReference>
<dbReference type="RefSeq" id="YP_405656.1">
    <property type="nucleotide sequence ID" value="NC_007606.1"/>
</dbReference>
<dbReference type="SMR" id="Q328U0"/>
<dbReference type="STRING" id="300267.SDY_4264"/>
<dbReference type="EnsemblBacteria" id="ABB64165">
    <property type="protein sequence ID" value="ABB64165"/>
    <property type="gene ID" value="SDY_4264"/>
</dbReference>
<dbReference type="GeneID" id="93777579"/>
<dbReference type="KEGG" id="sdy:SDY_4264"/>
<dbReference type="PATRIC" id="fig|300267.13.peg.5027"/>
<dbReference type="HOGENOM" id="CLU_043846_1_2_6"/>
<dbReference type="UniPathway" id="UPA00070">
    <property type="reaction ID" value="UER00116"/>
</dbReference>
<dbReference type="Proteomes" id="UP000002716">
    <property type="component" value="Chromosome"/>
</dbReference>
<dbReference type="GO" id="GO:0005829">
    <property type="term" value="C:cytosol"/>
    <property type="evidence" value="ECO:0007669"/>
    <property type="project" value="TreeGrafter"/>
</dbReference>
<dbReference type="GO" id="GO:0016597">
    <property type="term" value="F:amino acid binding"/>
    <property type="evidence" value="ECO:0007669"/>
    <property type="project" value="InterPro"/>
</dbReference>
<dbReference type="GO" id="GO:0004070">
    <property type="term" value="F:aspartate carbamoyltransferase activity"/>
    <property type="evidence" value="ECO:0007669"/>
    <property type="project" value="UniProtKB-UniRule"/>
</dbReference>
<dbReference type="GO" id="GO:0006207">
    <property type="term" value="P:'de novo' pyrimidine nucleobase biosynthetic process"/>
    <property type="evidence" value="ECO:0007669"/>
    <property type="project" value="InterPro"/>
</dbReference>
<dbReference type="GO" id="GO:0044205">
    <property type="term" value="P:'de novo' UMP biosynthetic process"/>
    <property type="evidence" value="ECO:0007669"/>
    <property type="project" value="UniProtKB-UniRule"/>
</dbReference>
<dbReference type="GO" id="GO:0006520">
    <property type="term" value="P:amino acid metabolic process"/>
    <property type="evidence" value="ECO:0007669"/>
    <property type="project" value="InterPro"/>
</dbReference>
<dbReference type="FunFam" id="3.40.50.1370:FF:000001">
    <property type="entry name" value="Aspartate carbamoyltransferase"/>
    <property type="match status" value="1"/>
</dbReference>
<dbReference type="FunFam" id="3.40.50.1370:FF:000002">
    <property type="entry name" value="Aspartate carbamoyltransferase 2"/>
    <property type="match status" value="1"/>
</dbReference>
<dbReference type="Gene3D" id="3.40.50.1370">
    <property type="entry name" value="Aspartate/ornithine carbamoyltransferase"/>
    <property type="match status" value="2"/>
</dbReference>
<dbReference type="HAMAP" id="MF_00001">
    <property type="entry name" value="Asp_carb_tr"/>
    <property type="match status" value="1"/>
</dbReference>
<dbReference type="InterPro" id="IPR006132">
    <property type="entry name" value="Asp/Orn_carbamoyltranf_P-bd"/>
</dbReference>
<dbReference type="InterPro" id="IPR006130">
    <property type="entry name" value="Asp/Orn_carbamoylTrfase"/>
</dbReference>
<dbReference type="InterPro" id="IPR036901">
    <property type="entry name" value="Asp/Orn_carbamoylTrfase_sf"/>
</dbReference>
<dbReference type="InterPro" id="IPR002082">
    <property type="entry name" value="Asp_carbamoyltransf"/>
</dbReference>
<dbReference type="InterPro" id="IPR006131">
    <property type="entry name" value="Asp_carbamoyltransf_Asp/Orn-bd"/>
</dbReference>
<dbReference type="NCBIfam" id="TIGR00670">
    <property type="entry name" value="asp_carb_tr"/>
    <property type="match status" value="1"/>
</dbReference>
<dbReference type="NCBIfam" id="NF002032">
    <property type="entry name" value="PRK00856.1"/>
    <property type="match status" value="1"/>
</dbReference>
<dbReference type="PANTHER" id="PTHR45753:SF6">
    <property type="entry name" value="ASPARTATE CARBAMOYLTRANSFERASE"/>
    <property type="match status" value="1"/>
</dbReference>
<dbReference type="PANTHER" id="PTHR45753">
    <property type="entry name" value="ORNITHINE CARBAMOYLTRANSFERASE, MITOCHONDRIAL"/>
    <property type="match status" value="1"/>
</dbReference>
<dbReference type="Pfam" id="PF00185">
    <property type="entry name" value="OTCace"/>
    <property type="match status" value="1"/>
</dbReference>
<dbReference type="Pfam" id="PF02729">
    <property type="entry name" value="OTCace_N"/>
    <property type="match status" value="1"/>
</dbReference>
<dbReference type="PRINTS" id="PR00100">
    <property type="entry name" value="AOTCASE"/>
</dbReference>
<dbReference type="PRINTS" id="PR00101">
    <property type="entry name" value="ATCASE"/>
</dbReference>
<dbReference type="SUPFAM" id="SSF53671">
    <property type="entry name" value="Aspartate/ornithine carbamoyltransferase"/>
    <property type="match status" value="1"/>
</dbReference>
<dbReference type="PROSITE" id="PS00097">
    <property type="entry name" value="CARBAMOYLTRANSFERASE"/>
    <property type="match status" value="1"/>
</dbReference>
<protein>
    <recommendedName>
        <fullName evidence="1">Aspartate carbamoyltransferase catalytic subunit</fullName>
        <ecNumber evidence="1">2.1.3.2</ecNumber>
    </recommendedName>
    <alternativeName>
        <fullName evidence="1">Aspartate transcarbamylase</fullName>
        <shortName evidence="1">ATCase</shortName>
    </alternativeName>
</protein>
<gene>
    <name evidence="1" type="primary">pyrB</name>
    <name type="ordered locus">SDY_4264</name>
</gene>